<sequence length="42" mass="4851">CLGENVPCDKDRPNCCSKYECLEPTGYGRCYASYYSYKKKTL</sequence>
<comment type="function">
    <text evidence="2">Inhibits voltage-gated calcium channels (Cav) in rat cerebellar granule cells.</text>
</comment>
<comment type="subcellular location">
    <subcellularLocation>
        <location evidence="2">Secreted</location>
    </subcellularLocation>
</comment>
<comment type="tissue specificity">
    <text evidence="2">Expressed by the venom gland.</text>
</comment>
<comment type="domain">
    <text evidence="1">The presence of a 'disulfide through disulfide knottin' structurally defines this protein as a knottin.</text>
</comment>
<comment type="similarity">
    <text evidence="4">Belongs to the neurotoxin 14 (magi-1) family. 08 (Ltx-4) subfamily.</text>
</comment>
<reference key="1">
    <citation type="patent" date="1998-05-13" number="EP0668872">
        <title>Calcium channel blocking polypeptides from Theraphosidae Aphonopelma.</title>
        <authorList>
            <person name="Nason D.M."/>
            <person name="Phillips D."/>
            <person name="Saccomano N.A."/>
            <person name="Volkmann R.A."/>
        </authorList>
    </citation>
    <scope>PROTEIN SEQUENCE</scope>
    <scope>FUNCTION</scope>
    <scope>SUBCELLULAR LOCATION</scope>
    <scope>TISSUE SPECIFICITY</scope>
    <scope>IDENTIFICATION BY MASS SPECTROMETRY</scope>
    <source>
        <tissue>Venom</tissue>
    </source>
</reference>
<protein>
    <recommendedName>
        <fullName>Omega-theraphotoxin-Asp3a</fullName>
        <shortName>Omega-TRTX-Asp3a</shortName>
    </recommendedName>
    <alternativeName>
        <fullName evidence="3">Peptide 7-13.2</fullName>
    </alternativeName>
</protein>
<accession>P0CI04</accession>
<name>TX132_APHSP</name>
<proteinExistence type="evidence at protein level"/>
<organism>
    <name type="scientific">Aphonopelma sp.</name>
    <name type="common">American tarantula</name>
    <dbReference type="NCBI Taxonomy" id="29932"/>
    <lineage>
        <taxon>Eukaryota</taxon>
        <taxon>Metazoa</taxon>
        <taxon>Ecdysozoa</taxon>
        <taxon>Arthropoda</taxon>
        <taxon>Chelicerata</taxon>
        <taxon>Arachnida</taxon>
        <taxon>Araneae</taxon>
        <taxon>Mygalomorphae</taxon>
        <taxon>Theraphosidae</taxon>
        <taxon>Aphonopelma</taxon>
    </lineage>
</organism>
<evidence type="ECO:0000250" key="1"/>
<evidence type="ECO:0000269" key="2">
    <source ref="1"/>
</evidence>
<evidence type="ECO:0000303" key="3">
    <source ref="1"/>
</evidence>
<evidence type="ECO:0000305" key="4"/>
<keyword id="KW-0108">Calcium channel impairing toxin</keyword>
<keyword id="KW-0903">Direct protein sequencing</keyword>
<keyword id="KW-1015">Disulfide bond</keyword>
<keyword id="KW-0872">Ion channel impairing toxin</keyword>
<keyword id="KW-0960">Knottin</keyword>
<keyword id="KW-0528">Neurotoxin</keyword>
<keyword id="KW-0964">Secreted</keyword>
<keyword id="KW-0800">Toxin</keyword>
<keyword id="KW-1218">Voltage-gated calcium channel impairing toxin</keyword>
<feature type="chain" id="PRO_0000401918" description="Omega-theraphotoxin-Asp3a">
    <location>
        <begin position="1"/>
        <end position="42"/>
    </location>
</feature>
<feature type="disulfide bond" evidence="1">
    <location>
        <begin position="1"/>
        <end position="16"/>
    </location>
</feature>
<feature type="disulfide bond" evidence="1">
    <location>
        <begin position="8"/>
        <end position="21"/>
    </location>
</feature>
<feature type="disulfide bond" evidence="1">
    <location>
        <begin position="15"/>
        <end position="30"/>
    </location>
</feature>
<dbReference type="SMR" id="P0CI04"/>
<dbReference type="GO" id="GO:0005576">
    <property type="term" value="C:extracellular region"/>
    <property type="evidence" value="ECO:0007669"/>
    <property type="project" value="UniProtKB-SubCell"/>
</dbReference>
<dbReference type="GO" id="GO:0005246">
    <property type="term" value="F:calcium channel regulator activity"/>
    <property type="evidence" value="ECO:0007669"/>
    <property type="project" value="UniProtKB-KW"/>
</dbReference>
<dbReference type="GO" id="GO:0019871">
    <property type="term" value="F:sodium channel inhibitor activity"/>
    <property type="evidence" value="ECO:0007669"/>
    <property type="project" value="InterPro"/>
</dbReference>
<dbReference type="GO" id="GO:0090729">
    <property type="term" value="F:toxin activity"/>
    <property type="evidence" value="ECO:0007669"/>
    <property type="project" value="UniProtKB-KW"/>
</dbReference>
<dbReference type="InterPro" id="IPR012627">
    <property type="entry name" value="Toxin_22"/>
</dbReference>
<dbReference type="Pfam" id="PF08092">
    <property type="entry name" value="Toxin_22"/>
    <property type="match status" value="1"/>
</dbReference>